<comment type="similarity">
    <text evidence="1">Belongs to the UPF0741 family.</text>
</comment>
<comment type="sequence caution" evidence="2">
    <conflict type="erroneous initiation">
        <sequence resource="EMBL-CDS" id="ABK88058"/>
    </conflict>
</comment>
<evidence type="ECO:0000255" key="1">
    <source>
        <dbReference type="HAMAP-Rule" id="MF_01863"/>
    </source>
</evidence>
<evidence type="ECO:0000305" key="2"/>
<reference key="1">
    <citation type="journal article" date="2007" name="J. Bacteriol.">
        <title>The complete genome sequence of Bacillus thuringiensis Al Hakam.</title>
        <authorList>
            <person name="Challacombe J.F."/>
            <person name="Altherr M.R."/>
            <person name="Xie G."/>
            <person name="Bhotika S.S."/>
            <person name="Brown N."/>
            <person name="Bruce D."/>
            <person name="Campbell C.S."/>
            <person name="Campbell M.L."/>
            <person name="Chen J."/>
            <person name="Chertkov O."/>
            <person name="Cleland C."/>
            <person name="Dimitrijevic M."/>
            <person name="Doggett N.A."/>
            <person name="Fawcett J.J."/>
            <person name="Glavina T."/>
            <person name="Goodwin L.A."/>
            <person name="Green L.D."/>
            <person name="Han C.S."/>
            <person name="Hill K.K."/>
            <person name="Hitchcock P."/>
            <person name="Jackson P.J."/>
            <person name="Keim P."/>
            <person name="Kewalramani A.R."/>
            <person name="Longmire J."/>
            <person name="Lucas S."/>
            <person name="Malfatti S."/>
            <person name="Martinez D."/>
            <person name="McMurry K."/>
            <person name="Meincke L.J."/>
            <person name="Misra M."/>
            <person name="Moseman B.L."/>
            <person name="Mundt M."/>
            <person name="Munk A.C."/>
            <person name="Okinaka R.T."/>
            <person name="Parson-Quintana B."/>
            <person name="Reilly L.P."/>
            <person name="Richardson P."/>
            <person name="Robinson D.L."/>
            <person name="Saunders E."/>
            <person name="Tapia R."/>
            <person name="Tesmer J.G."/>
            <person name="Thayer N."/>
            <person name="Thompson L.S."/>
            <person name="Tice H."/>
            <person name="Ticknor L.O."/>
            <person name="Wills P.L."/>
            <person name="Gilna P."/>
            <person name="Brettin T.S."/>
        </authorList>
    </citation>
    <scope>NUCLEOTIDE SEQUENCE [LARGE SCALE GENOMIC DNA]</scope>
    <source>
        <strain>Al Hakam</strain>
    </source>
</reference>
<dbReference type="EMBL" id="CP000485">
    <property type="protein sequence ID" value="ABK88058.1"/>
    <property type="status" value="ALT_INIT"/>
    <property type="molecule type" value="Genomic_DNA"/>
</dbReference>
<dbReference type="RefSeq" id="WP_000526077.1">
    <property type="nucleotide sequence ID" value="NC_008600.1"/>
</dbReference>
<dbReference type="SMR" id="A0RLG5"/>
<dbReference type="KEGG" id="btl:BALH_4882"/>
<dbReference type="HOGENOM" id="CLU_163820_1_0_9"/>
<dbReference type="HAMAP" id="MF_01863">
    <property type="entry name" value="UPF0741"/>
    <property type="match status" value="1"/>
</dbReference>
<dbReference type="InterPro" id="IPR009910">
    <property type="entry name" value="DUF1450"/>
</dbReference>
<dbReference type="InterPro" id="IPR020880">
    <property type="entry name" value="UPF0741"/>
</dbReference>
<dbReference type="Pfam" id="PF07293">
    <property type="entry name" value="DUF1450"/>
    <property type="match status" value="1"/>
</dbReference>
<feature type="chain" id="PRO_0000372739" description="UPF0741 protein BALH_4882">
    <location>
        <begin position="1"/>
        <end position="74"/>
    </location>
</feature>
<proteinExistence type="inferred from homology"/>
<protein>
    <recommendedName>
        <fullName evidence="1">UPF0741 protein BALH_4882</fullName>
    </recommendedName>
</protein>
<organism>
    <name type="scientific">Bacillus thuringiensis (strain Al Hakam)</name>
    <dbReference type="NCBI Taxonomy" id="412694"/>
    <lineage>
        <taxon>Bacteria</taxon>
        <taxon>Bacillati</taxon>
        <taxon>Bacillota</taxon>
        <taxon>Bacilli</taxon>
        <taxon>Bacillales</taxon>
        <taxon>Bacillaceae</taxon>
        <taxon>Bacillus</taxon>
        <taxon>Bacillus cereus group</taxon>
    </lineage>
</organism>
<gene>
    <name type="ordered locus">BALH_4882</name>
</gene>
<accession>A0RLG5</accession>
<sequence>MGNEFRVCDDCQATNVKTLIPKLKKVDSCATIEVGCQSYCGPGRKKSFAFVNNRPVAAPTEDELIVKIEAKLNK</sequence>
<name>Y4882_BACAH</name>